<name>FTHS_YERE8</name>
<dbReference type="EC" id="6.3.4.3" evidence="1"/>
<dbReference type="EMBL" id="AM286415">
    <property type="protein sequence ID" value="CAL12075.1"/>
    <property type="status" value="ALT_INIT"/>
    <property type="molecule type" value="Genomic_DNA"/>
</dbReference>
<dbReference type="RefSeq" id="WP_042661416.1">
    <property type="nucleotide sequence ID" value="NC_008800.1"/>
</dbReference>
<dbReference type="RefSeq" id="YP_001006249.1">
    <property type="nucleotide sequence ID" value="NC_008800.1"/>
</dbReference>
<dbReference type="SMR" id="A1JMA3"/>
<dbReference type="KEGG" id="yen:YE1997"/>
<dbReference type="PATRIC" id="fig|393305.7.peg.2159"/>
<dbReference type="eggNOG" id="COG2759">
    <property type="taxonomic scope" value="Bacteria"/>
</dbReference>
<dbReference type="HOGENOM" id="CLU_003601_3_3_6"/>
<dbReference type="OrthoDB" id="9761733at2"/>
<dbReference type="UniPathway" id="UPA00193"/>
<dbReference type="Proteomes" id="UP000000642">
    <property type="component" value="Chromosome"/>
</dbReference>
<dbReference type="GO" id="GO:0005524">
    <property type="term" value="F:ATP binding"/>
    <property type="evidence" value="ECO:0007669"/>
    <property type="project" value="UniProtKB-UniRule"/>
</dbReference>
<dbReference type="GO" id="GO:0004329">
    <property type="term" value="F:formate-tetrahydrofolate ligase activity"/>
    <property type="evidence" value="ECO:0007669"/>
    <property type="project" value="UniProtKB-UniRule"/>
</dbReference>
<dbReference type="GO" id="GO:0035999">
    <property type="term" value="P:tetrahydrofolate interconversion"/>
    <property type="evidence" value="ECO:0007669"/>
    <property type="project" value="UniProtKB-UniRule"/>
</dbReference>
<dbReference type="CDD" id="cd00477">
    <property type="entry name" value="FTHFS"/>
    <property type="match status" value="1"/>
</dbReference>
<dbReference type="Gene3D" id="3.30.1510.10">
    <property type="entry name" value="Domain 2, N(10)-formyltetrahydrofolate synthetase"/>
    <property type="match status" value="1"/>
</dbReference>
<dbReference type="Gene3D" id="3.10.410.10">
    <property type="entry name" value="Formyltetrahydrofolate synthetase, domain 3"/>
    <property type="match status" value="1"/>
</dbReference>
<dbReference type="Gene3D" id="3.40.50.300">
    <property type="entry name" value="P-loop containing nucleotide triphosphate hydrolases"/>
    <property type="match status" value="1"/>
</dbReference>
<dbReference type="HAMAP" id="MF_01543">
    <property type="entry name" value="FTHFS"/>
    <property type="match status" value="1"/>
</dbReference>
<dbReference type="InterPro" id="IPR000559">
    <property type="entry name" value="Formate_THF_ligase"/>
</dbReference>
<dbReference type="InterPro" id="IPR020628">
    <property type="entry name" value="Formate_THF_ligase_CS"/>
</dbReference>
<dbReference type="InterPro" id="IPR027417">
    <property type="entry name" value="P-loop_NTPase"/>
</dbReference>
<dbReference type="NCBIfam" id="NF010030">
    <property type="entry name" value="PRK13505.1"/>
    <property type="match status" value="1"/>
</dbReference>
<dbReference type="NCBIfam" id="NF010031">
    <property type="entry name" value="PRK13506.1"/>
    <property type="match status" value="1"/>
</dbReference>
<dbReference type="Pfam" id="PF01268">
    <property type="entry name" value="FTHFS"/>
    <property type="match status" value="1"/>
</dbReference>
<dbReference type="SUPFAM" id="SSF52540">
    <property type="entry name" value="P-loop containing nucleoside triphosphate hydrolases"/>
    <property type="match status" value="1"/>
</dbReference>
<dbReference type="PROSITE" id="PS00722">
    <property type="entry name" value="FTHFS_2"/>
    <property type="match status" value="1"/>
</dbReference>
<evidence type="ECO:0000255" key="1">
    <source>
        <dbReference type="HAMAP-Rule" id="MF_01543"/>
    </source>
</evidence>
<evidence type="ECO:0000305" key="2"/>
<feature type="chain" id="PRO_0000293073" description="Formate--tetrahydrofolate ligase">
    <location>
        <begin position="1"/>
        <end position="585"/>
    </location>
</feature>
<feature type="binding site" evidence="1">
    <location>
        <begin position="74"/>
        <end position="81"/>
    </location>
    <ligand>
        <name>ATP</name>
        <dbReference type="ChEBI" id="CHEBI:30616"/>
    </ligand>
</feature>
<proteinExistence type="inferred from homology"/>
<sequence length="585" mass="61470">MTPTLSSSADVLPSLSNMSSETNLLPIQQIAPQLGLSADDLIPYGHHMAKVDISALRPSGPQGKLILVSSITPTPLGEGKTVTTIGLSQGINRLGYRGVACIRQPSLGPVFGVKGGAAGGGAAQVLPMEKLNLHLTGDIHAISAAHNLAAAALDARLYHEQRLGAVFSQQTGMPLLNIDAQQILWPRVVDHNDRALRHIQVGVGGGTHGVERHDHVEITAASELMAILALSESLHDMRQRIGRIILAHSTSGQAITADDLGVAGAMTALMKETIHPTLMQTSEQTPVLIHAGPFANIAHGNSSVLADRLGLQLADYVVTEAGFGSDMGMEKFFNIKYRQSGITPSCVVLVATLRSLKANSGVFDIKPGQPLPAEILNTNIPLLSQGCANLKWHINNAKSYGLPVVVAVNCFPDDSPEELAFLADYALSAGAIACEISEAFAKGGAGTTALAQRVIDACAHASPPVLAYPDNASLEQKIEILAQRYGAREVTFTPQARQQLDSITAAGFGHLPLCIAKTPLSISADASLKNVPHDFVLPVTACAVSAGAGFVRIYAGDIMTMPGLGTQPAYYHIDIDDEGCIRGLS</sequence>
<comment type="catalytic activity">
    <reaction evidence="1">
        <text>(6S)-5,6,7,8-tetrahydrofolate + formate + ATP = (6R)-10-formyltetrahydrofolate + ADP + phosphate</text>
        <dbReference type="Rhea" id="RHEA:20221"/>
        <dbReference type="ChEBI" id="CHEBI:15740"/>
        <dbReference type="ChEBI" id="CHEBI:30616"/>
        <dbReference type="ChEBI" id="CHEBI:43474"/>
        <dbReference type="ChEBI" id="CHEBI:57453"/>
        <dbReference type="ChEBI" id="CHEBI:195366"/>
        <dbReference type="ChEBI" id="CHEBI:456216"/>
        <dbReference type="EC" id="6.3.4.3"/>
    </reaction>
</comment>
<comment type="pathway">
    <text evidence="1">One-carbon metabolism; tetrahydrofolate interconversion.</text>
</comment>
<comment type="similarity">
    <text evidence="1">Belongs to the formate--tetrahydrofolate ligase family.</text>
</comment>
<comment type="sequence caution" evidence="2">
    <conflict type="erroneous initiation">
        <sequence resource="EMBL-CDS" id="CAL12075"/>
    </conflict>
</comment>
<reference key="1">
    <citation type="journal article" date="2006" name="PLoS Genet.">
        <title>The complete genome sequence and comparative genome analysis of the high pathogenicity Yersinia enterocolitica strain 8081.</title>
        <authorList>
            <person name="Thomson N.R."/>
            <person name="Howard S."/>
            <person name="Wren B.W."/>
            <person name="Holden M.T.G."/>
            <person name="Crossman L."/>
            <person name="Challis G.L."/>
            <person name="Churcher C."/>
            <person name="Mungall K."/>
            <person name="Brooks K."/>
            <person name="Chillingworth T."/>
            <person name="Feltwell T."/>
            <person name="Abdellah Z."/>
            <person name="Hauser H."/>
            <person name="Jagels K."/>
            <person name="Maddison M."/>
            <person name="Moule S."/>
            <person name="Sanders M."/>
            <person name="Whitehead S."/>
            <person name="Quail M.A."/>
            <person name="Dougan G."/>
            <person name="Parkhill J."/>
            <person name="Prentice M.B."/>
        </authorList>
    </citation>
    <scope>NUCLEOTIDE SEQUENCE [LARGE SCALE GENOMIC DNA]</scope>
    <source>
        <strain>NCTC 13174 / 8081</strain>
    </source>
</reference>
<keyword id="KW-0067">ATP-binding</keyword>
<keyword id="KW-0436">Ligase</keyword>
<keyword id="KW-0547">Nucleotide-binding</keyword>
<keyword id="KW-0554">One-carbon metabolism</keyword>
<accession>A1JMA3</accession>
<gene>
    <name evidence="1" type="primary">fhs</name>
    <name type="ordered locus">YE1997</name>
</gene>
<protein>
    <recommendedName>
        <fullName evidence="1">Formate--tetrahydrofolate ligase</fullName>
        <ecNumber evidence="1">6.3.4.3</ecNumber>
    </recommendedName>
    <alternativeName>
        <fullName evidence="1">Formyltetrahydrofolate synthetase</fullName>
        <shortName evidence="1">FHS</shortName>
        <shortName evidence="1">FTHFS</shortName>
    </alternativeName>
</protein>
<organism>
    <name type="scientific">Yersinia enterocolitica serotype O:8 / biotype 1B (strain NCTC 13174 / 8081)</name>
    <dbReference type="NCBI Taxonomy" id="393305"/>
    <lineage>
        <taxon>Bacteria</taxon>
        <taxon>Pseudomonadati</taxon>
        <taxon>Pseudomonadota</taxon>
        <taxon>Gammaproteobacteria</taxon>
        <taxon>Enterobacterales</taxon>
        <taxon>Yersiniaceae</taxon>
        <taxon>Yersinia</taxon>
    </lineage>
</organism>